<evidence type="ECO:0000255" key="1">
    <source>
        <dbReference type="HAMAP-Rule" id="MF_00600"/>
    </source>
</evidence>
<evidence type="ECO:0000269" key="2">
    <source>
    </source>
</evidence>
<evidence type="ECO:0000305" key="3"/>
<dbReference type="EC" id="5.6.1.7" evidence="1"/>
<dbReference type="EMBL" id="Z68137">
    <property type="protein sequence ID" value="CAA92242.1"/>
    <property type="molecule type" value="Genomic_DNA"/>
</dbReference>
<dbReference type="EMBL" id="CP000568">
    <property type="protein sequence ID" value="ABN54090.1"/>
    <property type="molecule type" value="Genomic_DNA"/>
</dbReference>
<dbReference type="PIR" id="S68249">
    <property type="entry name" value="S68249"/>
</dbReference>
<dbReference type="RefSeq" id="WP_003514589.1">
    <property type="nucleotide sequence ID" value="NC_009012.1"/>
</dbReference>
<dbReference type="SMR" id="P48212"/>
<dbReference type="STRING" id="203119.Cthe_2892"/>
<dbReference type="GeneID" id="35805463"/>
<dbReference type="KEGG" id="cth:Cthe_2892"/>
<dbReference type="eggNOG" id="COG0459">
    <property type="taxonomic scope" value="Bacteria"/>
</dbReference>
<dbReference type="HOGENOM" id="CLU_016503_3_0_9"/>
<dbReference type="OrthoDB" id="9766614at2"/>
<dbReference type="Proteomes" id="UP000002145">
    <property type="component" value="Chromosome"/>
</dbReference>
<dbReference type="GO" id="GO:0005737">
    <property type="term" value="C:cytoplasm"/>
    <property type="evidence" value="ECO:0007669"/>
    <property type="project" value="UniProtKB-SubCell"/>
</dbReference>
<dbReference type="GO" id="GO:0005524">
    <property type="term" value="F:ATP binding"/>
    <property type="evidence" value="ECO:0007669"/>
    <property type="project" value="UniProtKB-UniRule"/>
</dbReference>
<dbReference type="GO" id="GO:0140662">
    <property type="term" value="F:ATP-dependent protein folding chaperone"/>
    <property type="evidence" value="ECO:0007669"/>
    <property type="project" value="InterPro"/>
</dbReference>
<dbReference type="GO" id="GO:0016853">
    <property type="term" value="F:isomerase activity"/>
    <property type="evidence" value="ECO:0007669"/>
    <property type="project" value="UniProtKB-KW"/>
</dbReference>
<dbReference type="GO" id="GO:0051082">
    <property type="term" value="F:unfolded protein binding"/>
    <property type="evidence" value="ECO:0007669"/>
    <property type="project" value="UniProtKB-UniRule"/>
</dbReference>
<dbReference type="GO" id="GO:0042026">
    <property type="term" value="P:protein refolding"/>
    <property type="evidence" value="ECO:0007669"/>
    <property type="project" value="UniProtKB-UniRule"/>
</dbReference>
<dbReference type="CDD" id="cd03344">
    <property type="entry name" value="GroEL"/>
    <property type="match status" value="1"/>
</dbReference>
<dbReference type="FunFam" id="1.10.560.10:FF:000001">
    <property type="entry name" value="60 kDa chaperonin"/>
    <property type="match status" value="1"/>
</dbReference>
<dbReference type="FunFam" id="3.50.7.10:FF:000001">
    <property type="entry name" value="60 kDa chaperonin"/>
    <property type="match status" value="1"/>
</dbReference>
<dbReference type="Gene3D" id="3.50.7.10">
    <property type="entry name" value="GroEL"/>
    <property type="match status" value="1"/>
</dbReference>
<dbReference type="Gene3D" id="1.10.560.10">
    <property type="entry name" value="GroEL-like equatorial domain"/>
    <property type="match status" value="1"/>
</dbReference>
<dbReference type="Gene3D" id="3.30.260.10">
    <property type="entry name" value="TCP-1-like chaperonin intermediate domain"/>
    <property type="match status" value="1"/>
</dbReference>
<dbReference type="HAMAP" id="MF_00600">
    <property type="entry name" value="CH60"/>
    <property type="match status" value="1"/>
</dbReference>
<dbReference type="InterPro" id="IPR018370">
    <property type="entry name" value="Chaperonin_Cpn60_CS"/>
</dbReference>
<dbReference type="InterPro" id="IPR001844">
    <property type="entry name" value="Cpn60/GroEL"/>
</dbReference>
<dbReference type="InterPro" id="IPR002423">
    <property type="entry name" value="Cpn60/GroEL/TCP-1"/>
</dbReference>
<dbReference type="InterPro" id="IPR027409">
    <property type="entry name" value="GroEL-like_apical_dom_sf"/>
</dbReference>
<dbReference type="InterPro" id="IPR027413">
    <property type="entry name" value="GROEL-like_equatorial_sf"/>
</dbReference>
<dbReference type="InterPro" id="IPR027410">
    <property type="entry name" value="TCP-1-like_intermed_sf"/>
</dbReference>
<dbReference type="NCBIfam" id="TIGR02348">
    <property type="entry name" value="GroEL"/>
    <property type="match status" value="1"/>
</dbReference>
<dbReference type="NCBIfam" id="NF000592">
    <property type="entry name" value="PRK00013.1"/>
    <property type="match status" value="1"/>
</dbReference>
<dbReference type="NCBIfam" id="NF009487">
    <property type="entry name" value="PRK12849.1"/>
    <property type="match status" value="1"/>
</dbReference>
<dbReference type="NCBIfam" id="NF009488">
    <property type="entry name" value="PRK12850.1"/>
    <property type="match status" value="1"/>
</dbReference>
<dbReference type="NCBIfam" id="NF009489">
    <property type="entry name" value="PRK12851.1"/>
    <property type="match status" value="1"/>
</dbReference>
<dbReference type="PANTHER" id="PTHR45633">
    <property type="entry name" value="60 KDA HEAT SHOCK PROTEIN, MITOCHONDRIAL"/>
    <property type="match status" value="1"/>
</dbReference>
<dbReference type="Pfam" id="PF00118">
    <property type="entry name" value="Cpn60_TCP1"/>
    <property type="match status" value="1"/>
</dbReference>
<dbReference type="PRINTS" id="PR00298">
    <property type="entry name" value="CHAPERONIN60"/>
</dbReference>
<dbReference type="SUPFAM" id="SSF52029">
    <property type="entry name" value="GroEL apical domain-like"/>
    <property type="match status" value="1"/>
</dbReference>
<dbReference type="SUPFAM" id="SSF48592">
    <property type="entry name" value="GroEL equatorial domain-like"/>
    <property type="match status" value="1"/>
</dbReference>
<dbReference type="SUPFAM" id="SSF54849">
    <property type="entry name" value="GroEL-intermediate domain like"/>
    <property type="match status" value="1"/>
</dbReference>
<dbReference type="PROSITE" id="PS00296">
    <property type="entry name" value="CHAPERONINS_CPN60"/>
    <property type="match status" value="1"/>
</dbReference>
<proteinExistence type="evidence at protein level"/>
<protein>
    <recommendedName>
        <fullName evidence="1">Chaperonin GroEL</fullName>
        <ecNumber evidence="1">5.6.1.7</ecNumber>
    </recommendedName>
    <alternativeName>
        <fullName evidence="1">60 kDa chaperonin</fullName>
    </alternativeName>
    <alternativeName>
        <fullName evidence="1">Chaperonin-60</fullName>
        <shortName evidence="1">Cpn60</shortName>
    </alternativeName>
</protein>
<gene>
    <name evidence="1" type="primary">groEL</name>
    <name evidence="1" type="synonym">groL</name>
    <name type="synonym">mopA</name>
    <name type="ordered locus">Cthe_2892</name>
</gene>
<accession>P48212</accession>
<accession>A3DJG1</accession>
<sequence length="541" mass="57474">MAKQIKFGEEARRALERGVNQLADTVKVTLGPKGRNVVLDKKFGSPMITNDGVTIAKEIELEDPFENMGAQLVKEVATKTNDVAGDGTTTATLLAQAIIREGLKNVAAGANPMLLKKGIAKAVDAAVEGIKEISQKVKGKEDIARVASISANDEVIGELIADAMEKVTNDGVITVEEAKTMGTNLEIVEGMQFDRGYVSPYMVTDTEKMEAVLDEPYILITDKKISNIQDILPLLEQIVQQGKKLVIIAEDVEGEALATLLVNKLRGTFTCVAVKAPGFGDRRKAMLEDIAILTGGQVITSDLGLELKDTTVEQLGRARQVKVQKENTIIVDGAGDPKEIQKRIASIKSQIEETTSDFDREKLQERLAKLAGGVAVIQVGAATETEMKEKKLRIEDALAATKAAVEEGIVAGGGTALVNVIPKVAKVLDTVSGDEKTGVQIILRALEEPVRQIAENAGLEGSVIVEKVKASEPGIGFDAYNEKYVNMIEAGIVDPAKVTRSALQNAASVASMVLTTESVVADIPEKETSGGPGGAGMGGMY</sequence>
<name>CH60_ACET2</name>
<feature type="initiator methionine" description="Removed" evidence="2">
    <location>
        <position position="1"/>
    </location>
</feature>
<feature type="chain" id="PRO_0000063344" description="Chaperonin GroEL">
    <location>
        <begin position="2"/>
        <end position="541"/>
    </location>
</feature>
<feature type="binding site" evidence="1">
    <location>
        <begin position="29"/>
        <end position="32"/>
    </location>
    <ligand>
        <name>ATP</name>
        <dbReference type="ChEBI" id="CHEBI:30616"/>
    </ligand>
</feature>
<feature type="binding site" evidence="1">
    <location>
        <begin position="86"/>
        <end position="90"/>
    </location>
    <ligand>
        <name>ATP</name>
        <dbReference type="ChEBI" id="CHEBI:30616"/>
    </ligand>
</feature>
<feature type="binding site" evidence="1">
    <location>
        <position position="413"/>
    </location>
    <ligand>
        <name>ATP</name>
        <dbReference type="ChEBI" id="CHEBI:30616"/>
    </ligand>
</feature>
<feature type="binding site" evidence="1">
    <location>
        <position position="494"/>
    </location>
    <ligand>
        <name>ATP</name>
        <dbReference type="ChEBI" id="CHEBI:30616"/>
    </ligand>
</feature>
<feature type="sequence conflict" description="In Ref. 3; AA sequence." evidence="3" ref="3">
    <original>LE</original>
    <variation>ML</variation>
    <location>
        <begin position="15"/>
        <end position="16"/>
    </location>
</feature>
<feature type="sequence conflict" description="In Ref. 3; AA sequence." evidence="3" ref="3">
    <original>Q</original>
    <variation>K</variation>
    <location>
        <position position="21"/>
    </location>
</feature>
<organism>
    <name type="scientific">Acetivibrio thermocellus (strain ATCC 27405 / DSM 1237 / JCM 9322 / NBRC 103400 / NCIMB 10682 / NRRL B-4536 / VPI 7372)</name>
    <name type="common">Clostridium thermocellum</name>
    <dbReference type="NCBI Taxonomy" id="203119"/>
    <lineage>
        <taxon>Bacteria</taxon>
        <taxon>Bacillati</taxon>
        <taxon>Bacillota</taxon>
        <taxon>Clostridia</taxon>
        <taxon>Eubacteriales</taxon>
        <taxon>Oscillospiraceae</taxon>
        <taxon>Acetivibrio</taxon>
    </lineage>
</organism>
<keyword id="KW-0067">ATP-binding</keyword>
<keyword id="KW-0143">Chaperone</keyword>
<keyword id="KW-0963">Cytoplasm</keyword>
<keyword id="KW-0903">Direct protein sequencing</keyword>
<keyword id="KW-0413">Isomerase</keyword>
<keyword id="KW-0547">Nucleotide-binding</keyword>
<keyword id="KW-1185">Reference proteome</keyword>
<comment type="function">
    <text evidence="1">Together with its co-chaperonin GroES, plays an essential role in assisting protein folding. The GroEL-GroES system forms a nano-cage that allows encapsulation of the non-native substrate proteins and provides a physical environment optimized to promote and accelerate protein folding.</text>
</comment>
<comment type="catalytic activity">
    <reaction evidence="1">
        <text>ATP + H2O + a folded polypeptide = ADP + phosphate + an unfolded polypeptide.</text>
        <dbReference type="EC" id="5.6.1.7"/>
    </reaction>
</comment>
<comment type="subunit">
    <text evidence="1">Forms a cylinder of 14 subunits composed of two heptameric rings stacked back-to-back. Interacts with the co-chaperonin GroES.</text>
</comment>
<comment type="subcellular location">
    <subcellularLocation>
        <location evidence="1">Cytoplasm</location>
    </subcellularLocation>
</comment>
<comment type="similarity">
    <text evidence="1">Belongs to the chaperonin (HSP60) family.</text>
</comment>
<reference key="1">
    <citation type="journal article" date="1997" name="Gene">
        <title>Sequence and transcriptional analysis of groES and groEL genes from the thermophilic bacterium Clostridium thermocellum.</title>
        <authorList>
            <person name="Ciruela A."/>
            <person name="Cross S."/>
            <person name="Freedman R.B."/>
            <person name="Hazlewood G.P."/>
        </authorList>
    </citation>
    <scope>NUCLEOTIDE SEQUENCE [GENOMIC DNA]</scope>
</reference>
<reference key="2">
    <citation type="submission" date="2007-02" db="EMBL/GenBank/DDBJ databases">
        <title>Complete sequence of Clostridium thermocellum ATCC 27405.</title>
        <authorList>
            <consortium name="US DOE Joint Genome Institute"/>
            <person name="Copeland A."/>
            <person name="Lucas S."/>
            <person name="Lapidus A."/>
            <person name="Barry K."/>
            <person name="Detter J.C."/>
            <person name="Glavina del Rio T."/>
            <person name="Hammon N."/>
            <person name="Israni S."/>
            <person name="Dalin E."/>
            <person name="Tice H."/>
            <person name="Pitluck S."/>
            <person name="Chertkov O."/>
            <person name="Brettin T."/>
            <person name="Bruce D."/>
            <person name="Han C."/>
            <person name="Tapia R."/>
            <person name="Gilna P."/>
            <person name="Schmutz J."/>
            <person name="Larimer F."/>
            <person name="Land M."/>
            <person name="Hauser L."/>
            <person name="Kyrpides N."/>
            <person name="Mikhailova N."/>
            <person name="Wu J.H.D."/>
            <person name="Newcomb M."/>
            <person name="Richardson P."/>
        </authorList>
    </citation>
    <scope>NUCLEOTIDE SEQUENCE [LARGE SCALE GENOMIC DNA]</scope>
    <source>
        <strain>ATCC 27405 / DSM 1237 / JCM 9322 / NBRC 103400 / NCIMB 10682 / NRRL B-4536 / VPI 7372</strain>
    </source>
</reference>
<reference key="3">
    <citation type="journal article" date="1996" name="Biochem. J.">
        <title>Thermostable chaperonin from Clostridium thermocellum.</title>
        <authorList>
            <person name="Cross S.J."/>
            <person name="Ciruela A."/>
            <person name="Poomputsa K."/>
            <person name="Romaniec M.P.M."/>
            <person name="Freedman R.B."/>
        </authorList>
    </citation>
    <scope>PROTEIN SEQUENCE OF 2-21</scope>
</reference>